<organism>
    <name type="scientific">Homo sapiens</name>
    <name type="common">Human</name>
    <dbReference type="NCBI Taxonomy" id="9606"/>
    <lineage>
        <taxon>Eukaryota</taxon>
        <taxon>Metazoa</taxon>
        <taxon>Chordata</taxon>
        <taxon>Craniata</taxon>
        <taxon>Vertebrata</taxon>
        <taxon>Euteleostomi</taxon>
        <taxon>Mammalia</taxon>
        <taxon>Eutheria</taxon>
        <taxon>Euarchontoglires</taxon>
        <taxon>Primates</taxon>
        <taxon>Haplorrhini</taxon>
        <taxon>Catarrhini</taxon>
        <taxon>Hominidae</taxon>
        <taxon>Homo</taxon>
    </lineage>
</organism>
<comment type="function">
    <text evidence="8">Voltage-sensitive calcium channels (VSCC) mediate the entry of calcium ions into excitable cells and are also involved in a variety of calcium-dependent processes, including muscle contraction, hormone or neurotransmitter release, gene expression, cell motility, cell division and cell death. This channel gives rise to T-type calcium currents. T-type calcium channels belong to the 'low-voltage activated (LVA)' group and are strongly blocked by nickel and mibefradil. A particularity of this type of channels is an opening at quite negative potentials, and a voltage-dependent inactivation. T-type channels serve pacemaking functions in both central neurons and cardiac nodal cells and support calcium signaling in secretory cells and vascular smooth muscle. They may also be involved in the modulation of firing patterns of neurons which is important for information processing as well as in cell growth processes. Gates in voltage ranges similar to, but higher than alpha 1G or alpha 1H.</text>
</comment>
<comment type="function">
    <molecule>Isoform 3</molecule>
    <text evidence="5">Voltage-sensitive calcium channels (VSCC) mediate the entry of calcium ions into excitable cells and are also involved in a variety of calcium-dependent processes, including muscle contraction, hormone or neurotransmitter release, gene expression, cell motility, cell division and cell death. This channel gives rise to T-type calcium currents.</text>
</comment>
<comment type="function">
    <molecule>Isoform 4</molecule>
    <text evidence="6">Voltage-sensitive calcium channels (VSCC) mediate the entry of calcium ions into excitable cells and are also involved in a variety of calcium-dependent processes, including muscle contraction, hormone or neurotransmitter release, gene expression, cell motility, cell division and cell death. This channel gives rise to T-type calcium currents.</text>
</comment>
<comment type="catalytic activity">
    <reaction evidence="8">
        <text>Ca(2+)(in) = Ca(2+)(out)</text>
        <dbReference type="Rhea" id="RHEA:29671"/>
        <dbReference type="ChEBI" id="CHEBI:29108"/>
    </reaction>
</comment>
<comment type="catalytic activity">
    <molecule>Isoform 3</molecule>
    <reaction evidence="5">
        <text>Ca(2+)(in) = Ca(2+)(out)</text>
        <dbReference type="Rhea" id="RHEA:29671"/>
        <dbReference type="ChEBI" id="CHEBI:29108"/>
    </reaction>
</comment>
<comment type="catalytic activity">
    <molecule>Isoform 4</molecule>
    <reaction evidence="6">
        <text>Ca(2+)(in) = Ca(2+)(out)</text>
        <dbReference type="Rhea" id="RHEA:29671"/>
        <dbReference type="ChEBI" id="CHEBI:29108"/>
    </reaction>
</comment>
<comment type="subunit">
    <text evidence="7">Interacts with CATSPER1 and CATSPER2, leading to suppress T-type calcium channel activity.</text>
</comment>
<comment type="interaction">
    <interactant intactId="EBI-1220829">
        <id>Q9P0X4</id>
    </interactant>
    <interactant intactId="EBI-744545">
        <id>Q8NEC5</id>
        <label>CATSPER1</label>
    </interactant>
    <organismsDiffer>false</organismsDiffer>
    <experiments>5</experiments>
</comment>
<comment type="interaction">
    <interactant intactId="EBI-1220829">
        <id>Q9P0X4</id>
    </interactant>
    <interactant intactId="EBI-2215024">
        <id>Q96P56</id>
        <label>CATSPER2</label>
    </interactant>
    <organismsDiffer>false</organismsDiffer>
    <experiments>3</experiments>
</comment>
<comment type="subcellular location">
    <subcellularLocation>
        <location evidence="3">Membrane</location>
        <topology evidence="3">Multi-pass membrane protein</topology>
    </subcellularLocation>
</comment>
<comment type="alternative products">
    <event type="alternative splicing"/>
    <isoform>
        <id>Q9P0X4-1</id>
        <name>1</name>
        <name>Delta36b</name>
        <sequence type="displayed"/>
    </isoform>
    <isoform>
        <id>Q9P0X4-2</id>
        <name>2</name>
        <sequence type="described" ref="VSP_000951"/>
    </isoform>
    <isoform>
        <id>Q9P0X4-3</id>
        <name>3</name>
        <name>Alpha1I-a</name>
        <sequence type="described" ref="VSP_000950 VSP_000951"/>
    </isoform>
    <isoform>
        <id>Q9P0X4-4</id>
        <name>4</name>
        <sequence type="described" ref="VSP_000950"/>
    </isoform>
</comment>
<comment type="tissue specificity">
    <text>Brain specific.</text>
</comment>
<comment type="domain">
    <text>Each of the four internal repeats contains five hydrophobic transmembrane segments (S1, S2, S3, S5, S6) and one positively charged transmembrane segment (S4). S4 segments probably represent the voltage-sensor and are characterized by a series of positively charged amino acids at every third position.</text>
</comment>
<comment type="PTM">
    <text evidence="1">In response to raising of intracellular calcium, the T-type channels are activated by CaM-kinase II.</text>
</comment>
<comment type="disease" evidence="8">
    <disease id="DI-06546">
        <name>Neurodevelopmental disorder with speech impairment and with or without seizures</name>
        <acronym>NEDSIS</acronym>
        <description>An autosomal dominant disorder with variable manifestations. Severely affected individuals have profound global developmental delay, hypotonia, delayed or absent walking, absent speech, feeding difficulties, cortical visual impairment, and onset of hyperexcitability and seizures in the first months or years of life. Some patients manifest a milder phenotype characterized by mild to moderate cognitive impairment and mild speech delay, usually without seizures.</description>
        <dbReference type="MIM" id="620114"/>
    </disease>
    <text>The disease is caused by variants affecting the gene represented in this entry.</text>
</comment>
<comment type="similarity">
    <text evidence="12">Belongs to the calcium channel alpha-1 subunit (TC 1.A.1.11) family. CACNA1I subfamily.</text>
</comment>
<gene>
    <name type="primary">CACNA1I</name>
    <name type="synonym">KIAA1120</name>
</gene>
<keyword id="KW-0002">3D-structure</keyword>
<keyword id="KW-0025">Alternative splicing</keyword>
<keyword id="KW-0106">Calcium</keyword>
<keyword id="KW-0107">Calcium channel</keyword>
<keyword id="KW-0109">Calcium transport</keyword>
<keyword id="KW-0225">Disease variant</keyword>
<keyword id="KW-0325">Glycoprotein</keyword>
<keyword id="KW-0991">Intellectual disability</keyword>
<keyword id="KW-0407">Ion channel</keyword>
<keyword id="KW-0406">Ion transport</keyword>
<keyword id="KW-0472">Membrane</keyword>
<keyword id="KW-0597">Phosphoprotein</keyword>
<keyword id="KW-1267">Proteomics identification</keyword>
<keyword id="KW-1185">Reference proteome</keyword>
<keyword id="KW-0677">Repeat</keyword>
<keyword id="KW-0812">Transmembrane</keyword>
<keyword id="KW-1133">Transmembrane helix</keyword>
<keyword id="KW-0813">Transport</keyword>
<keyword id="KW-0851">Voltage-gated channel</keyword>
<name>CAC1I_HUMAN</name>
<evidence type="ECO:0000250" key="1"/>
<evidence type="ECO:0000250" key="2">
    <source>
        <dbReference type="UniProtKB" id="Q9Z0Y8"/>
    </source>
</evidence>
<evidence type="ECO:0000255" key="3"/>
<evidence type="ECO:0000256" key="4">
    <source>
        <dbReference type="SAM" id="MobiDB-lite"/>
    </source>
</evidence>
<evidence type="ECO:0000269" key="5">
    <source>
    </source>
</evidence>
<evidence type="ECO:0000269" key="6">
    <source>
    </source>
</evidence>
<evidence type="ECO:0000269" key="7">
    <source>
    </source>
</evidence>
<evidence type="ECO:0000269" key="8">
    <source>
    </source>
</evidence>
<evidence type="ECO:0000303" key="9">
    <source>
    </source>
</evidence>
<evidence type="ECO:0000303" key="10">
    <source>
    </source>
</evidence>
<evidence type="ECO:0000303" key="11">
    <source>
    </source>
</evidence>
<evidence type="ECO:0000305" key="12"/>
<evidence type="ECO:0007829" key="13">
    <source>
        <dbReference type="PDB" id="7WLI"/>
    </source>
</evidence>
<proteinExistence type="evidence at protein level"/>
<dbReference type="EMBL" id="AF129133">
    <property type="protein sequence ID" value="AAD45251.1"/>
    <property type="molecule type" value="mRNA"/>
</dbReference>
<dbReference type="EMBL" id="AF142567">
    <property type="protein sequence ID" value="AAF25722.1"/>
    <property type="molecule type" value="mRNA"/>
</dbReference>
<dbReference type="EMBL" id="AF211189">
    <property type="protein sequence ID" value="AAF44626.1"/>
    <property type="molecule type" value="mRNA"/>
</dbReference>
<dbReference type="EMBL" id="AF393329">
    <property type="protein sequence ID" value="AAM67414.1"/>
    <property type="molecule type" value="mRNA"/>
</dbReference>
<dbReference type="EMBL" id="AL008716">
    <property type="status" value="NOT_ANNOTATED_CDS"/>
    <property type="molecule type" value="Genomic_DNA"/>
</dbReference>
<dbReference type="EMBL" id="AL022312">
    <property type="status" value="NOT_ANNOTATED_CDS"/>
    <property type="molecule type" value="Genomic_DNA"/>
</dbReference>
<dbReference type="EMBL" id="AL022319">
    <property type="status" value="NOT_ANNOTATED_CDS"/>
    <property type="molecule type" value="Genomic_DNA"/>
</dbReference>
<dbReference type="EMBL" id="AB032946">
    <property type="protein sequence ID" value="BAA86434.1"/>
    <property type="molecule type" value="mRNA"/>
</dbReference>
<dbReference type="CCDS" id="CCDS46710.1">
    <molecule id="Q9P0X4-1"/>
</dbReference>
<dbReference type="CCDS" id="CCDS46711.1">
    <molecule id="Q9P0X4-4"/>
</dbReference>
<dbReference type="RefSeq" id="NP_001003406.1">
    <molecule id="Q9P0X4-4"/>
    <property type="nucleotide sequence ID" value="NM_001003406.2"/>
</dbReference>
<dbReference type="RefSeq" id="NP_066919.2">
    <molecule id="Q9P0X4-1"/>
    <property type="nucleotide sequence ID" value="NM_021096.3"/>
</dbReference>
<dbReference type="PDB" id="7WLI">
    <property type="method" value="EM"/>
    <property type="resolution" value="3.30 A"/>
    <property type="chains" value="A=1-2223"/>
</dbReference>
<dbReference type="PDB" id="7WLJ">
    <property type="method" value="EM"/>
    <property type="resolution" value="3.90 A"/>
    <property type="chains" value="A=1-2223"/>
</dbReference>
<dbReference type="PDB" id="7WLK">
    <property type="method" value="EM"/>
    <property type="resolution" value="3.60 A"/>
    <property type="chains" value="A=1-2223"/>
</dbReference>
<dbReference type="PDB" id="7WLL">
    <property type="method" value="EM"/>
    <property type="resolution" value="3.60 A"/>
    <property type="chains" value="A=1-2223"/>
</dbReference>
<dbReference type="PDBsum" id="7WLI"/>
<dbReference type="PDBsum" id="7WLJ"/>
<dbReference type="PDBsum" id="7WLK"/>
<dbReference type="PDBsum" id="7WLL"/>
<dbReference type="EMDB" id="EMD-32584"/>
<dbReference type="EMDB" id="EMD-32585"/>
<dbReference type="EMDB" id="EMD-32586"/>
<dbReference type="EMDB" id="EMD-32587"/>
<dbReference type="SMR" id="Q9P0X4"/>
<dbReference type="BioGRID" id="114425">
    <property type="interactions" value="4"/>
</dbReference>
<dbReference type="CORUM" id="Q9P0X4"/>
<dbReference type="FunCoup" id="Q9P0X4">
    <property type="interactions" value="715"/>
</dbReference>
<dbReference type="IntAct" id="Q9P0X4">
    <property type="interactions" value="3"/>
</dbReference>
<dbReference type="STRING" id="9606.ENSP00000385019"/>
<dbReference type="BindingDB" id="Q9P0X4"/>
<dbReference type="ChEMBL" id="CHEMBL5558"/>
<dbReference type="DrugBank" id="DB01118">
    <property type="generic name" value="Amiodarone"/>
</dbReference>
<dbReference type="DrugBank" id="DB00381">
    <property type="generic name" value="Amlodipine"/>
</dbReference>
<dbReference type="DrugBank" id="DB09231">
    <property type="generic name" value="Benidipine"/>
</dbReference>
<dbReference type="DrugBank" id="DB13746">
    <property type="generic name" value="Bioallethrin"/>
</dbReference>
<dbReference type="DrugBank" id="DB11148">
    <property type="generic name" value="Butamben"/>
</dbReference>
<dbReference type="DrugBank" id="DB11093">
    <property type="generic name" value="Calcium citrate"/>
</dbReference>
<dbReference type="DrugBank" id="DB11348">
    <property type="generic name" value="Calcium Phosphate"/>
</dbReference>
<dbReference type="DrugBank" id="DB14481">
    <property type="generic name" value="Calcium phosphate dihydrate"/>
</dbReference>
<dbReference type="DrugBank" id="DB09061">
    <property type="generic name" value="Cannabidiol"/>
</dbReference>
<dbReference type="DrugBank" id="DB00568">
    <property type="generic name" value="Cinnarizine"/>
</dbReference>
<dbReference type="DrugBank" id="DB09235">
    <property type="generic name" value="Efonidipine"/>
</dbReference>
<dbReference type="DrugBank" id="DB00228">
    <property type="generic name" value="Enflurane"/>
</dbReference>
<dbReference type="DrugBank" id="DB00153">
    <property type="generic name" value="Ergocalciferol"/>
</dbReference>
<dbReference type="DrugBank" id="DB04841">
    <property type="generic name" value="Flunarizine"/>
</dbReference>
<dbReference type="DrugBank" id="DB09238">
    <property type="generic name" value="Manidipine"/>
</dbReference>
<dbReference type="DrugBank" id="DB14009">
    <property type="generic name" value="Medical Cannabis"/>
</dbReference>
<dbReference type="DrugBank" id="DB01388">
    <property type="generic name" value="Mibefradil"/>
</dbReference>
<dbReference type="DrugBank" id="DB14011">
    <property type="generic name" value="Nabiximols"/>
</dbReference>
<dbReference type="DrugBank" id="DB00622">
    <property type="generic name" value="Nicardipine"/>
</dbReference>
<dbReference type="DrugBank" id="DB01115">
    <property type="generic name" value="Nifedipine"/>
</dbReference>
<dbReference type="DrugBank" id="DB06712">
    <property type="generic name" value="Nilvadipine"/>
</dbReference>
<dbReference type="DrugBank" id="DB06152">
    <property type="generic name" value="Nylidrin"/>
</dbReference>
<dbReference type="DrugBank" id="DB00617">
    <property type="generic name" value="Paramethadione"/>
</dbReference>
<dbReference type="DrugBank" id="DB09498">
    <property type="generic name" value="Strontium chloride Sr-89"/>
</dbReference>
<dbReference type="DrugBank" id="DB09089">
    <property type="generic name" value="Trimebutine"/>
</dbReference>
<dbReference type="DrugBank" id="DB00661">
    <property type="generic name" value="Verapamil"/>
</dbReference>
<dbReference type="DrugBank" id="DB00909">
    <property type="generic name" value="Zonisamide"/>
</dbReference>
<dbReference type="DrugCentral" id="Q9P0X4"/>
<dbReference type="GuidetoPHARMACOLOGY" id="537"/>
<dbReference type="TCDB" id="1.A.1.11.7">
    <property type="family name" value="the voltage-gated ion channel (vic) superfamily"/>
</dbReference>
<dbReference type="GlyCosmos" id="Q9P0X4">
    <property type="glycosylation" value="5 sites, No reported glycans"/>
</dbReference>
<dbReference type="GlyGen" id="Q9P0X4">
    <property type="glycosylation" value="7 sites, 1 O-linked glycan (2 sites)"/>
</dbReference>
<dbReference type="iPTMnet" id="Q9P0X4"/>
<dbReference type="PhosphoSitePlus" id="Q9P0X4"/>
<dbReference type="BioMuta" id="CACNA1I"/>
<dbReference type="DMDM" id="23396521"/>
<dbReference type="MassIVE" id="Q9P0X4"/>
<dbReference type="PaxDb" id="9606-ENSP00000385019"/>
<dbReference type="PeptideAtlas" id="Q9P0X4"/>
<dbReference type="ProteomicsDB" id="83622">
    <molecule id="Q9P0X4-1"/>
</dbReference>
<dbReference type="ProteomicsDB" id="83623">
    <molecule id="Q9P0X4-2"/>
</dbReference>
<dbReference type="ProteomicsDB" id="83624">
    <molecule id="Q9P0X4-3"/>
</dbReference>
<dbReference type="ProteomicsDB" id="83625">
    <molecule id="Q9P0X4-4"/>
</dbReference>
<dbReference type="Antibodypedia" id="26656">
    <property type="antibodies" value="112 antibodies from 25 providers"/>
</dbReference>
<dbReference type="DNASU" id="8911"/>
<dbReference type="Ensembl" id="ENST00000401624.5">
    <molecule id="Q9P0X4-2"/>
    <property type="protein sequence ID" value="ENSP00000383887.1"/>
    <property type="gene ID" value="ENSG00000100346.18"/>
</dbReference>
<dbReference type="Ensembl" id="ENST00000402142.4">
    <molecule id="Q9P0X4-1"/>
    <property type="protein sequence ID" value="ENSP00000385019.3"/>
    <property type="gene ID" value="ENSG00000100346.18"/>
</dbReference>
<dbReference type="Ensembl" id="ENST00000404898.5">
    <molecule id="Q9P0X4-4"/>
    <property type="protein sequence ID" value="ENSP00000384093.1"/>
    <property type="gene ID" value="ENSG00000100346.18"/>
</dbReference>
<dbReference type="Ensembl" id="ENST00000407673.5">
    <molecule id="Q9P0X4-3"/>
    <property type="protein sequence ID" value="ENSP00000385680.1"/>
    <property type="gene ID" value="ENSG00000100346.18"/>
</dbReference>
<dbReference type="GeneID" id="8911"/>
<dbReference type="KEGG" id="hsa:8911"/>
<dbReference type="MANE-Select" id="ENST00000402142.4">
    <property type="protein sequence ID" value="ENSP00000385019.3"/>
    <property type="RefSeq nucleotide sequence ID" value="NM_021096.4"/>
    <property type="RefSeq protein sequence ID" value="NP_066919.2"/>
</dbReference>
<dbReference type="UCSC" id="uc003ayc.5">
    <molecule id="Q9P0X4-1"/>
    <property type="organism name" value="human"/>
</dbReference>
<dbReference type="AGR" id="HGNC:1396"/>
<dbReference type="CTD" id="8911"/>
<dbReference type="DisGeNET" id="8911"/>
<dbReference type="GeneCards" id="CACNA1I"/>
<dbReference type="HGNC" id="HGNC:1396">
    <property type="gene designation" value="CACNA1I"/>
</dbReference>
<dbReference type="HPA" id="ENSG00000100346">
    <property type="expression patterns" value="Tissue enhanced (brain, thyroid gland)"/>
</dbReference>
<dbReference type="MalaCards" id="CACNA1I"/>
<dbReference type="MIM" id="608230">
    <property type="type" value="gene"/>
</dbReference>
<dbReference type="MIM" id="620114">
    <property type="type" value="phenotype"/>
</dbReference>
<dbReference type="neXtProt" id="NX_Q9P0X4"/>
<dbReference type="OpenTargets" id="ENSG00000100346"/>
<dbReference type="Orphanet" id="178469">
    <property type="disease" value="Autosomal dominant non-syndromic intellectual disability"/>
</dbReference>
<dbReference type="PharmGKB" id="PA26011"/>
<dbReference type="VEuPathDB" id="HostDB:ENSG00000100346"/>
<dbReference type="eggNOG" id="KOG2302">
    <property type="taxonomic scope" value="Eukaryota"/>
</dbReference>
<dbReference type="GeneTree" id="ENSGT00940000158594"/>
<dbReference type="HOGENOM" id="CLU_000540_2_0_1"/>
<dbReference type="InParanoid" id="Q9P0X4"/>
<dbReference type="OMA" id="CNFDESD"/>
<dbReference type="OrthoDB" id="416585at2759"/>
<dbReference type="PAN-GO" id="Q9P0X4">
    <property type="GO annotations" value="8 GO annotations based on evolutionary models"/>
</dbReference>
<dbReference type="PhylomeDB" id="Q9P0X4"/>
<dbReference type="TreeFam" id="TF313555"/>
<dbReference type="PathwayCommons" id="Q9P0X4"/>
<dbReference type="Reactome" id="R-HSA-419037">
    <property type="pathway name" value="NCAM1 interactions"/>
</dbReference>
<dbReference type="Reactome" id="R-HSA-445355">
    <property type="pathway name" value="Smooth Muscle Contraction"/>
</dbReference>
<dbReference type="SignaLink" id="Q9P0X4"/>
<dbReference type="BioGRID-ORCS" id="8911">
    <property type="hits" value="13 hits in 1157 CRISPR screens"/>
</dbReference>
<dbReference type="ChiTaRS" id="CACNA1I">
    <property type="organism name" value="human"/>
</dbReference>
<dbReference type="GeneWiki" id="CACNA1I"/>
<dbReference type="GenomeRNAi" id="8911"/>
<dbReference type="Pharos" id="Q9P0X4">
    <property type="development level" value="Tclin"/>
</dbReference>
<dbReference type="PRO" id="PR:Q9P0X4"/>
<dbReference type="Proteomes" id="UP000005640">
    <property type="component" value="Chromosome 22"/>
</dbReference>
<dbReference type="RNAct" id="Q9P0X4">
    <property type="molecule type" value="protein"/>
</dbReference>
<dbReference type="Bgee" id="ENSG00000100346">
    <property type="expression patterns" value="Expressed in Brodmann (1909) area 23 and 117 other cell types or tissues"/>
</dbReference>
<dbReference type="GO" id="GO:0005886">
    <property type="term" value="C:plasma membrane"/>
    <property type="evidence" value="ECO:0000304"/>
    <property type="project" value="Reactome"/>
</dbReference>
<dbReference type="GO" id="GO:0005891">
    <property type="term" value="C:voltage-gated calcium channel complex"/>
    <property type="evidence" value="ECO:0000318"/>
    <property type="project" value="GO_Central"/>
</dbReference>
<dbReference type="GO" id="GO:0005245">
    <property type="term" value="F:voltage-gated calcium channel activity"/>
    <property type="evidence" value="ECO:0000314"/>
    <property type="project" value="UniProtKB"/>
</dbReference>
<dbReference type="GO" id="GO:0098703">
    <property type="term" value="P:calcium ion import across plasma membrane"/>
    <property type="evidence" value="ECO:0000318"/>
    <property type="project" value="GO_Central"/>
</dbReference>
<dbReference type="GO" id="GO:0019228">
    <property type="term" value="P:neuronal action potential"/>
    <property type="evidence" value="ECO:0007669"/>
    <property type="project" value="Ensembl"/>
</dbReference>
<dbReference type="GO" id="GO:0007165">
    <property type="term" value="P:signal transduction"/>
    <property type="evidence" value="ECO:0000304"/>
    <property type="project" value="ProtInc"/>
</dbReference>
<dbReference type="GO" id="GO:0030431">
    <property type="term" value="P:sleep"/>
    <property type="evidence" value="ECO:0007669"/>
    <property type="project" value="Ensembl"/>
</dbReference>
<dbReference type="FunFam" id="1.10.287.70:FF:000018">
    <property type="entry name" value="Voltage-dependent T-type calcium channel subunit alpha"/>
    <property type="match status" value="1"/>
</dbReference>
<dbReference type="FunFam" id="1.10.287.70:FF:000053">
    <property type="entry name" value="Voltage-dependent T-type calcium channel subunit alpha"/>
    <property type="match status" value="1"/>
</dbReference>
<dbReference type="FunFam" id="1.10.287.70:FF:000054">
    <property type="entry name" value="Voltage-dependent T-type calcium channel subunit alpha"/>
    <property type="match status" value="1"/>
</dbReference>
<dbReference type="FunFam" id="1.20.120.350:FF:000007">
    <property type="entry name" value="Voltage-dependent T-type calcium channel subunit alpha"/>
    <property type="match status" value="1"/>
</dbReference>
<dbReference type="FunFam" id="1.20.120.350:FF:000008">
    <property type="entry name" value="Voltage-dependent T-type calcium channel subunit alpha"/>
    <property type="match status" value="1"/>
</dbReference>
<dbReference type="FunFam" id="1.20.120.350:FF:000009">
    <property type="entry name" value="Voltage-dependent T-type calcium channel subunit alpha"/>
    <property type="match status" value="1"/>
</dbReference>
<dbReference type="FunFam" id="1.20.120.350:FF:000012">
    <property type="entry name" value="Voltage-dependent T-type calcium channel subunit alpha"/>
    <property type="match status" value="1"/>
</dbReference>
<dbReference type="Gene3D" id="1.10.287.70">
    <property type="match status" value="4"/>
</dbReference>
<dbReference type="Gene3D" id="1.20.120.350">
    <property type="entry name" value="Voltage-gated potassium channels. Chain C"/>
    <property type="match status" value="4"/>
</dbReference>
<dbReference type="InterPro" id="IPR005821">
    <property type="entry name" value="Ion_trans_dom"/>
</dbReference>
<dbReference type="InterPro" id="IPR050599">
    <property type="entry name" value="VDCC_alpha-1_subunit"/>
</dbReference>
<dbReference type="InterPro" id="IPR005445">
    <property type="entry name" value="VDCC_T_a1"/>
</dbReference>
<dbReference type="InterPro" id="IPR002077">
    <property type="entry name" value="VDCCAlpha1"/>
</dbReference>
<dbReference type="InterPro" id="IPR027359">
    <property type="entry name" value="Volt_channel_dom_sf"/>
</dbReference>
<dbReference type="PANTHER" id="PTHR45628">
    <property type="entry name" value="VOLTAGE-DEPENDENT CALCIUM CHANNEL TYPE A SUBUNIT ALPHA-1"/>
    <property type="match status" value="1"/>
</dbReference>
<dbReference type="PANTHER" id="PTHR45628:SF39">
    <property type="entry name" value="VOLTAGE-DEPENDENT T-TYPE CALCIUM CHANNEL SUBUNIT ALPHA-1I"/>
    <property type="match status" value="1"/>
</dbReference>
<dbReference type="Pfam" id="PF00520">
    <property type="entry name" value="Ion_trans"/>
    <property type="match status" value="4"/>
</dbReference>
<dbReference type="PRINTS" id="PR00167">
    <property type="entry name" value="CACHANNEL"/>
</dbReference>
<dbReference type="PRINTS" id="PR01629">
    <property type="entry name" value="TVDCCALPHA1"/>
</dbReference>
<dbReference type="SUPFAM" id="SSF81324">
    <property type="entry name" value="Voltage-gated potassium channels"/>
    <property type="match status" value="4"/>
</dbReference>
<feature type="chain" id="PRO_0000053957" description="Voltage-dependent T-type calcium channel subunit alpha-1I">
    <location>
        <begin position="1"/>
        <end position="2223"/>
    </location>
</feature>
<feature type="topological domain" description="Cytoplasmic" evidence="3">
    <location>
        <begin position="1"/>
        <end position="78"/>
    </location>
</feature>
<feature type="transmembrane region" description="Helical; Name=S1 of repeat I" evidence="3">
    <location>
        <begin position="79"/>
        <end position="99"/>
    </location>
</feature>
<feature type="topological domain" description="Extracellular" evidence="3">
    <location>
        <begin position="100"/>
        <end position="120"/>
    </location>
</feature>
<feature type="transmembrane region" description="Helical; Name=S2 of repeat I" evidence="3">
    <location>
        <begin position="121"/>
        <end position="141"/>
    </location>
</feature>
<feature type="topological domain" description="Cytoplasmic" evidence="3">
    <location>
        <begin position="142"/>
        <end position="148"/>
    </location>
</feature>
<feature type="transmembrane region" description="Helical; Name=S3 of repeat I" evidence="3">
    <location>
        <begin position="149"/>
        <end position="168"/>
    </location>
</feature>
<feature type="topological domain" description="Extracellular" evidence="3">
    <location>
        <begin position="169"/>
        <end position="173"/>
    </location>
</feature>
<feature type="transmembrane region" description="Helical; Name=S4 of repeat I" evidence="3">
    <location>
        <begin position="174"/>
        <end position="191"/>
    </location>
</feature>
<feature type="topological domain" description="Cytoplasmic" evidence="3">
    <location>
        <begin position="192"/>
        <end position="211"/>
    </location>
</feature>
<feature type="transmembrane region" description="Helical; Name=S5 of repeat I" evidence="3">
    <location>
        <begin position="212"/>
        <end position="232"/>
    </location>
</feature>
<feature type="topological domain" description="Extracellular" evidence="3">
    <location>
        <begin position="233"/>
        <end position="377"/>
    </location>
</feature>
<feature type="transmembrane region" description="Helical; Name=S6 of repeat I" evidence="3">
    <location>
        <begin position="378"/>
        <end position="398"/>
    </location>
</feature>
<feature type="topological domain" description="Cytoplasmic" evidence="3">
    <location>
        <begin position="399"/>
        <end position="640"/>
    </location>
</feature>
<feature type="transmembrane region" description="Helical; Name=S1 of repeat II" evidence="3">
    <location>
        <begin position="641"/>
        <end position="661"/>
    </location>
</feature>
<feature type="topological domain" description="Extracellular" evidence="3">
    <location>
        <begin position="662"/>
        <end position="676"/>
    </location>
</feature>
<feature type="transmembrane region" description="Helical; Name=S2 of repeat II" evidence="3">
    <location>
        <begin position="677"/>
        <end position="697"/>
    </location>
</feature>
<feature type="topological domain" description="Cytoplasmic" evidence="3">
    <location>
        <begin position="698"/>
        <end position="702"/>
    </location>
</feature>
<feature type="transmembrane region" description="Helical; Name=S3 of repeat II" evidence="3">
    <location>
        <begin position="703"/>
        <end position="721"/>
    </location>
</feature>
<feature type="topological domain" description="Extracellular" evidence="3">
    <location>
        <begin position="722"/>
        <end position="729"/>
    </location>
</feature>
<feature type="transmembrane region" description="Helical; Name=S4 of repeat II" evidence="3">
    <location>
        <begin position="730"/>
        <end position="753"/>
    </location>
</feature>
<feature type="topological domain" description="Cytoplasmic" evidence="3">
    <location>
        <begin position="754"/>
        <end position="764"/>
    </location>
</feature>
<feature type="transmembrane region" description="Helical; Name=S5 of repeat II" evidence="3">
    <location>
        <begin position="765"/>
        <end position="785"/>
    </location>
</feature>
<feature type="topological domain" description="Extracellular" evidence="3">
    <location>
        <begin position="786"/>
        <end position="841"/>
    </location>
</feature>
<feature type="transmembrane region" description="Helical; Name=S6 of repeat II" evidence="3">
    <location>
        <begin position="842"/>
        <end position="862"/>
    </location>
</feature>
<feature type="topological domain" description="Cytoplasmic" evidence="3">
    <location>
        <begin position="863"/>
        <end position="1166"/>
    </location>
</feature>
<feature type="transmembrane region" description="Helical; Name=S1 of repeat III" evidence="3">
    <location>
        <begin position="1167"/>
        <end position="1187"/>
    </location>
</feature>
<feature type="topological domain" description="Extracellular" evidence="3">
    <location>
        <begin position="1188"/>
        <end position="1209"/>
    </location>
</feature>
<feature type="transmembrane region" description="Helical; Name=S2 of repeat III" evidence="3">
    <location>
        <begin position="1210"/>
        <end position="1230"/>
    </location>
</feature>
<feature type="topological domain" description="Cytoplasmic" evidence="3">
    <location>
        <begin position="1231"/>
        <end position="1244"/>
    </location>
</feature>
<feature type="transmembrane region" description="Helical; Name=S3 of repeat III" evidence="3">
    <location>
        <begin position="1245"/>
        <end position="1265"/>
    </location>
</feature>
<feature type="topological domain" description="Extracellular" evidence="3">
    <location>
        <begin position="1266"/>
        <end position="1272"/>
    </location>
</feature>
<feature type="transmembrane region" description="Helical; Name=S4 of repeat III" evidence="3">
    <location>
        <begin position="1273"/>
        <end position="1294"/>
    </location>
</feature>
<feature type="topological domain" description="Cytoplasmic" evidence="3">
    <location>
        <begin position="1295"/>
        <end position="1304"/>
    </location>
</feature>
<feature type="transmembrane region" description="Helical; Name=S5 of repeat III" evidence="3">
    <location>
        <begin position="1305"/>
        <end position="1325"/>
    </location>
</feature>
<feature type="topological domain" description="Extracellular" evidence="3">
    <location>
        <begin position="1326"/>
        <end position="1410"/>
    </location>
</feature>
<feature type="transmembrane region" description="Helical; Name=S6 of repeat III" evidence="3">
    <location>
        <begin position="1411"/>
        <end position="1431"/>
    </location>
</feature>
<feature type="topological domain" description="Cytoplasmic" evidence="3">
    <location>
        <begin position="1432"/>
        <end position="1485"/>
    </location>
</feature>
<feature type="transmembrane region" description="Helical; Name=S1 of repeat IV" evidence="3">
    <location>
        <begin position="1486"/>
        <end position="1506"/>
    </location>
</feature>
<feature type="topological domain" description="Extracellular" evidence="3">
    <location>
        <begin position="1507"/>
        <end position="1522"/>
    </location>
</feature>
<feature type="transmembrane region" description="Helical; Name=S2 of repeat IV" evidence="3">
    <location>
        <begin position="1523"/>
        <end position="1543"/>
    </location>
</feature>
<feature type="topological domain" description="Cytoplasmic" evidence="3">
    <location>
        <begin position="1544"/>
        <end position="1556"/>
    </location>
</feature>
<feature type="transmembrane region" description="Helical; Name=S3 of repeat IV" evidence="3">
    <location>
        <begin position="1557"/>
        <end position="1577"/>
    </location>
</feature>
<feature type="topological domain" description="Extracellular" evidence="3">
    <location>
        <begin position="1578"/>
        <end position="1583"/>
    </location>
</feature>
<feature type="transmembrane region" description="Helical; Name=S4 of repeat IV" evidence="3">
    <location>
        <begin position="1584"/>
        <end position="1607"/>
    </location>
</feature>
<feature type="topological domain" description="Cytoplasmic" evidence="3">
    <location>
        <begin position="1608"/>
        <end position="1621"/>
    </location>
</feature>
<feature type="transmembrane region" description="Helical; Name=S5 of repeat IV" evidence="3">
    <location>
        <begin position="1622"/>
        <end position="1642"/>
    </location>
</feature>
<feature type="topological domain" description="Extracellular" evidence="3">
    <location>
        <begin position="1643"/>
        <end position="1709"/>
    </location>
</feature>
<feature type="transmembrane region" description="Helical; Name=S6 of repeat IV" evidence="3">
    <location>
        <begin position="1710"/>
        <end position="1730"/>
    </location>
</feature>
<feature type="topological domain" description="Cytoplasmic" evidence="3">
    <location>
        <begin position="1731"/>
        <end position="2223"/>
    </location>
</feature>
<feature type="repeat" description="I">
    <location>
        <begin position="66"/>
        <end position="401"/>
    </location>
</feature>
<feature type="repeat" description="II">
    <location>
        <begin position="626"/>
        <end position="865"/>
    </location>
</feature>
<feature type="repeat" description="III">
    <location>
        <begin position="1157"/>
        <end position="1434"/>
    </location>
</feature>
<feature type="repeat" description="IV">
    <location>
        <begin position="1472"/>
        <end position="1733"/>
    </location>
</feature>
<feature type="region of interest" description="Disordered" evidence="4">
    <location>
        <begin position="1"/>
        <end position="46"/>
    </location>
</feature>
<feature type="region of interest" description="Disordered" evidence="4">
    <location>
        <begin position="467"/>
        <end position="536"/>
    </location>
</feature>
<feature type="region of interest" description="Disordered" evidence="4">
    <location>
        <begin position="555"/>
        <end position="616"/>
    </location>
</feature>
<feature type="region of interest" description="Disordered" evidence="4">
    <location>
        <begin position="899"/>
        <end position="936"/>
    </location>
</feature>
<feature type="region of interest" description="Disordered" evidence="4">
    <location>
        <begin position="1758"/>
        <end position="1784"/>
    </location>
</feature>
<feature type="region of interest" description="Disordered" evidence="4">
    <location>
        <begin position="1868"/>
        <end position="1897"/>
    </location>
</feature>
<feature type="region of interest" description="Disordered" evidence="4">
    <location>
        <begin position="1937"/>
        <end position="1960"/>
    </location>
</feature>
<feature type="region of interest" description="Disordered" evidence="4">
    <location>
        <begin position="2013"/>
        <end position="2062"/>
    </location>
</feature>
<feature type="region of interest" description="Disordered" evidence="4">
    <location>
        <begin position="2076"/>
        <end position="2223"/>
    </location>
</feature>
<feature type="compositionally biased region" description="Low complexity" evidence="4">
    <location>
        <begin position="1"/>
        <end position="19"/>
    </location>
</feature>
<feature type="compositionally biased region" description="Low complexity" evidence="4">
    <location>
        <begin position="912"/>
        <end position="936"/>
    </location>
</feature>
<feature type="compositionally biased region" description="Gly residues" evidence="4">
    <location>
        <begin position="1770"/>
        <end position="1784"/>
    </location>
</feature>
<feature type="compositionally biased region" description="Low complexity" evidence="4">
    <location>
        <begin position="2013"/>
        <end position="2028"/>
    </location>
</feature>
<feature type="compositionally biased region" description="Polar residues" evidence="4">
    <location>
        <begin position="2029"/>
        <end position="2040"/>
    </location>
</feature>
<feature type="compositionally biased region" description="Polar residues" evidence="4">
    <location>
        <begin position="2087"/>
        <end position="2096"/>
    </location>
</feature>
<feature type="compositionally biased region" description="Basic and acidic residues" evidence="4">
    <location>
        <begin position="2098"/>
        <end position="2111"/>
    </location>
</feature>
<feature type="compositionally biased region" description="Low complexity" evidence="4">
    <location>
        <begin position="2126"/>
        <end position="2136"/>
    </location>
</feature>
<feature type="compositionally biased region" description="Pro residues" evidence="4">
    <location>
        <begin position="2137"/>
        <end position="2146"/>
    </location>
</feature>
<feature type="compositionally biased region" description="Low complexity" evidence="4">
    <location>
        <begin position="2160"/>
        <end position="2176"/>
    </location>
</feature>
<feature type="site" description="Calcium ion selectivity and permeability" evidence="1">
    <location>
        <position position="357"/>
    </location>
</feature>
<feature type="site" description="Calcium ion selectivity and permeability" evidence="1">
    <location>
        <position position="821"/>
    </location>
</feature>
<feature type="site" description="Calcium ion selectivity and permeability" evidence="1">
    <location>
        <position position="1380"/>
    </location>
</feature>
<feature type="site" description="Calcium ion selectivity and permeability" evidence="1">
    <location>
        <position position="1678"/>
    </location>
</feature>
<feature type="modified residue" description="Phosphoserine" evidence="2">
    <location>
        <position position="1058"/>
    </location>
</feature>
<feature type="glycosylation site" description="N-linked (GlcNAc...) asparagine" evidence="3">
    <location>
        <position position="173"/>
    </location>
</feature>
<feature type="glycosylation site" description="N-linked (GlcNAc...) asparagine" evidence="3">
    <location>
        <position position="244"/>
    </location>
</feature>
<feature type="glycosylation site" description="N-linked (GlcNAc...) asparagine" evidence="3">
    <location>
        <position position="311"/>
    </location>
</feature>
<feature type="glycosylation site" description="N-linked (GlcNAc...) asparagine" evidence="3">
    <location>
        <position position="1342"/>
    </location>
</feature>
<feature type="glycosylation site" description="N-linked (GlcNAc...) asparagine" evidence="3">
    <location>
        <position position="1345"/>
    </location>
</feature>
<feature type="splice variant" id="VSP_000950" description="In isoform 3 and isoform 4." evidence="10 11">
    <original>HGKTKGQGDEGRHLGSRHCQTLHGPASPGNDHSGRE</original>
    <variation>Q</variation>
    <location>
        <begin position="488"/>
        <end position="523"/>
    </location>
</feature>
<feature type="splice variant" id="VSP_000951" description="In isoform 2 and isoform 3." evidence="9 10">
    <original>ATGSDTSLDASPSSSAGSLQTTLEDSLTLSDSPRRALGPPAPAPGPRAGLSPAARRRLSLRGRGLFSLRGLRAHQRSHSSGGSTSPGCTHHDSMDPSDEEGRGGAGGGGAGSEHSETLSSLSLTSLFCPPPPPPAPGLTPARKFSSTSSLAAPGRPHAAALAHGLARSPSWAADRSKDPPGRAPLPMGLGPLAPPPQPLPGELEPGDAASKRKR</original>
    <variation>VPTPPRP</variation>
    <location>
        <begin position="2010"/>
        <end position="2223"/>
    </location>
</feature>
<feature type="sequence variant" id="VAR_087825" description="In NEDSIS; gain-of-function variant; affects voltage-gated calcium channel activity by altering channel gating properties; changes current kinetics and left-shifts the voltage dependence of activation; when expressed in chromaffin cells it affects the mode of action potential firing." evidence="8">
    <original>I</original>
    <variation>M</variation>
    <location>
        <position position="860"/>
    </location>
</feature>
<feature type="sequence variant" id="VAR_087826" description="In NEDSIS; gain-of-function variant; affects voltage-gated calcium channel activity by altering channel gating properties; changes current kinetics and left-shifts the voltage dependence of activation; lower channel deactivation kinetics compared to wild type; when expressed in chromaffin cells it affects the mode of action potential firing." evidence="8">
    <original>I</original>
    <variation>N</variation>
    <location>
        <position position="860"/>
    </location>
</feature>
<feature type="sequence variant" id="VAR_013883" description="In dbSNP:rs136853." evidence="6">
    <original>I</original>
    <variation>V</variation>
    <location>
        <position position="1040"/>
    </location>
</feature>
<feature type="sequence variant" id="VAR_087827" description="In NEDSIS; gain-of-function variant; affects voltage-gated calcium channel activity by altering channel gating properties; changes current kinetics and left-shifts the voltage dependence of activation; lower channel deactivation kinetics compared to wild type; dbSNP:rs879255418." evidence="8">
    <original>I</original>
    <variation>T</variation>
    <location>
        <position position="1306"/>
    </location>
</feature>
<feature type="sequence variant" id="VAR_087828" description="In NEDSIS; gain-of-function variant; affects voltage-gated calcium channel activity by altering channel gating properties; changes current kinetics and left-shifts the voltage dependence of activation; lower channel deactivation kinetics compared to wild type." evidence="8">
    <original>M</original>
    <variation>I</variation>
    <location>
        <position position="1425"/>
    </location>
</feature>
<feature type="sequence variant" id="VAR_048745" description="In dbSNP:rs8141262.">
    <original>T</original>
    <variation>M</variation>
    <location>
        <position position="1513"/>
    </location>
</feature>
<feature type="sequence variant" id="VAR_013884" description="In dbSNP:rs2294369.">
    <original>G</original>
    <variation>A</variation>
    <location>
        <position position="1782"/>
    </location>
</feature>
<feature type="sequence variant" id="VAR_020050" description="In dbSNP:rs2294369.">
    <original>G</original>
    <variation>R</variation>
    <location>
        <position position="1782"/>
    </location>
</feature>
<feature type="helix" evidence="13">
    <location>
        <begin position="67"/>
        <end position="77"/>
    </location>
</feature>
<feature type="helix" evidence="13">
    <location>
        <begin position="79"/>
        <end position="97"/>
    </location>
</feature>
<feature type="turn" evidence="13">
    <location>
        <begin position="101"/>
        <end position="103"/>
    </location>
</feature>
<feature type="helix" evidence="13">
    <location>
        <begin position="110"/>
        <end position="137"/>
    </location>
</feature>
<feature type="strand" evidence="13">
    <location>
        <begin position="139"/>
        <end position="144"/>
    </location>
</feature>
<feature type="helix" evidence="13">
    <location>
        <begin position="145"/>
        <end position="147"/>
    </location>
</feature>
<feature type="helix" evidence="13">
    <location>
        <begin position="149"/>
        <end position="169"/>
    </location>
</feature>
<feature type="helix" evidence="13">
    <location>
        <begin position="178"/>
        <end position="189"/>
    </location>
</feature>
<feature type="helix" evidence="13">
    <location>
        <begin position="193"/>
        <end position="205"/>
    </location>
</feature>
<feature type="helix" evidence="13">
    <location>
        <begin position="210"/>
        <end position="230"/>
    </location>
</feature>
<feature type="strand" evidence="13">
    <location>
        <begin position="231"/>
        <end position="233"/>
    </location>
</feature>
<feature type="helix" evidence="13">
    <location>
        <begin position="234"/>
        <end position="236"/>
    </location>
</feature>
<feature type="strand" evidence="13">
    <location>
        <begin position="238"/>
        <end position="240"/>
    </location>
</feature>
<feature type="strand" evidence="13">
    <location>
        <begin position="255"/>
        <end position="257"/>
    </location>
</feature>
<feature type="helix" evidence="13">
    <location>
        <begin position="261"/>
        <end position="263"/>
    </location>
</feature>
<feature type="strand" evidence="13">
    <location>
        <begin position="272"/>
        <end position="274"/>
    </location>
</feature>
<feature type="strand" evidence="13">
    <location>
        <begin position="280"/>
        <end position="282"/>
    </location>
</feature>
<feature type="helix" evidence="13">
    <location>
        <begin position="319"/>
        <end position="322"/>
    </location>
</feature>
<feature type="strand" evidence="13">
    <location>
        <begin position="326"/>
        <end position="328"/>
    </location>
</feature>
<feature type="helix" evidence="13">
    <location>
        <begin position="333"/>
        <end position="336"/>
    </location>
</feature>
<feature type="helix" evidence="13">
    <location>
        <begin position="343"/>
        <end position="354"/>
    </location>
</feature>
<feature type="helix" evidence="13">
    <location>
        <begin position="359"/>
        <end position="369"/>
    </location>
</feature>
<feature type="helix" evidence="13">
    <location>
        <begin position="372"/>
        <end position="374"/>
    </location>
</feature>
<feature type="helix" evidence="13">
    <location>
        <begin position="375"/>
        <end position="381"/>
    </location>
</feature>
<feature type="turn" evidence="13">
    <location>
        <begin position="386"/>
        <end position="389"/>
    </location>
</feature>
<feature type="helix" evidence="13">
    <location>
        <begin position="390"/>
        <end position="412"/>
    </location>
</feature>
<feature type="helix" evidence="13">
    <location>
        <begin position="629"/>
        <end position="637"/>
    </location>
</feature>
<feature type="helix" evidence="13">
    <location>
        <begin position="642"/>
        <end position="659"/>
    </location>
</feature>
<feature type="helix" evidence="13">
    <location>
        <begin position="666"/>
        <end position="694"/>
    </location>
</feature>
<feature type="helix" evidence="13">
    <location>
        <begin position="696"/>
        <end position="701"/>
    </location>
</feature>
<feature type="helix" evidence="13">
    <location>
        <begin position="703"/>
        <end position="720"/>
    </location>
</feature>
<feature type="strand" evidence="13">
    <location>
        <begin position="723"/>
        <end position="725"/>
    </location>
</feature>
<feature type="turn" evidence="13">
    <location>
        <begin position="726"/>
        <end position="728"/>
    </location>
</feature>
<feature type="helix" evidence="13">
    <location>
        <begin position="732"/>
        <end position="743"/>
    </location>
</feature>
<feature type="helix" evidence="13">
    <location>
        <begin position="747"/>
        <end position="762"/>
    </location>
</feature>
<feature type="helix" evidence="13">
    <location>
        <begin position="768"/>
        <end position="784"/>
    </location>
</feature>
<feature type="turn" evidence="13">
    <location>
        <begin position="785"/>
        <end position="787"/>
    </location>
</feature>
<feature type="strand" evidence="13">
    <location>
        <begin position="793"/>
        <end position="796"/>
    </location>
</feature>
<feature type="helix" evidence="13">
    <location>
        <begin position="807"/>
        <end position="819"/>
    </location>
</feature>
<feature type="helix" evidence="13">
    <location>
        <begin position="823"/>
        <end position="831"/>
    </location>
</feature>
<feature type="turn" evidence="13">
    <location>
        <begin position="832"/>
        <end position="834"/>
    </location>
</feature>
<feature type="helix" evidence="13">
    <location>
        <begin position="836"/>
        <end position="838"/>
    </location>
</feature>
<feature type="helix" evidence="13">
    <location>
        <begin position="839"/>
        <end position="849"/>
    </location>
</feature>
<feature type="turn" evidence="13">
    <location>
        <begin position="850"/>
        <end position="852"/>
    </location>
</feature>
<feature type="helix" evidence="13">
    <location>
        <begin position="853"/>
        <end position="865"/>
    </location>
</feature>
<feature type="helix" evidence="13">
    <location>
        <begin position="1172"/>
        <end position="1187"/>
    </location>
</feature>
<feature type="helix" evidence="13">
    <location>
        <begin position="1199"/>
        <end position="1226"/>
    </location>
</feature>
<feature type="strand" evidence="13">
    <location>
        <begin position="1228"/>
        <end position="1233"/>
    </location>
</feature>
<feature type="helix" evidence="13">
    <location>
        <begin position="1235"/>
        <end position="1237"/>
    </location>
</feature>
<feature type="helix" evidence="13">
    <location>
        <begin position="1239"/>
        <end position="1259"/>
    </location>
</feature>
<feature type="helix" evidence="13">
    <location>
        <begin position="1268"/>
        <end position="1280"/>
    </location>
</feature>
<feature type="turn" evidence="13">
    <location>
        <begin position="1282"/>
        <end position="1288"/>
    </location>
</feature>
<feature type="helix" evidence="13">
    <location>
        <begin position="1290"/>
        <end position="1301"/>
    </location>
</feature>
<feature type="helix" evidence="13">
    <location>
        <begin position="1307"/>
        <end position="1327"/>
    </location>
</feature>
<feature type="helix" evidence="13">
    <location>
        <begin position="1346"/>
        <end position="1352"/>
    </location>
</feature>
<feature type="helix" evidence="13">
    <location>
        <begin position="1366"/>
        <end position="1377"/>
    </location>
</feature>
<feature type="helix" evidence="13">
    <location>
        <begin position="1382"/>
        <end position="1391"/>
    </location>
</feature>
<feature type="helix" evidence="13">
    <location>
        <begin position="1405"/>
        <end position="1407"/>
    </location>
</feature>
<feature type="helix" evidence="13">
    <location>
        <begin position="1408"/>
        <end position="1462"/>
    </location>
</feature>
<feature type="turn" evidence="13">
    <location>
        <begin position="1468"/>
        <end position="1476"/>
    </location>
</feature>
<feature type="turn" evidence="13">
    <location>
        <begin position="1478"/>
        <end position="1485"/>
    </location>
</feature>
<feature type="helix" evidence="13">
    <location>
        <begin position="1487"/>
        <end position="1504"/>
    </location>
</feature>
<feature type="helix" evidence="13">
    <location>
        <begin position="1513"/>
        <end position="1540"/>
    </location>
</feature>
<feature type="helix" evidence="13">
    <location>
        <begin position="1543"/>
        <end position="1548"/>
    </location>
</feature>
<feature type="strand" evidence="13">
    <location>
        <begin position="1549"/>
        <end position="1551"/>
    </location>
</feature>
<feature type="helix" evidence="13">
    <location>
        <begin position="1552"/>
        <end position="1574"/>
    </location>
</feature>
<feature type="helix" evidence="13">
    <location>
        <begin position="1581"/>
        <end position="1589"/>
    </location>
</feature>
<feature type="helix" evidence="13">
    <location>
        <begin position="1590"/>
        <end position="1599"/>
    </location>
</feature>
<feature type="helix" evidence="13">
    <location>
        <begin position="1603"/>
        <end position="1613"/>
    </location>
</feature>
<feature type="helix" evidence="13">
    <location>
        <begin position="1616"/>
        <end position="1641"/>
    </location>
</feature>
<feature type="strand" evidence="13">
    <location>
        <begin position="1647"/>
        <end position="1650"/>
    </location>
</feature>
<feature type="strand" evidence="13">
    <location>
        <begin position="1660"/>
        <end position="1664"/>
    </location>
</feature>
<feature type="helix" evidence="13">
    <location>
        <begin position="1665"/>
        <end position="1675"/>
    </location>
</feature>
<feature type="helix" evidence="13">
    <location>
        <begin position="1680"/>
        <end position="1687"/>
    </location>
</feature>
<feature type="strand" evidence="13">
    <location>
        <begin position="1692"/>
        <end position="1695"/>
    </location>
</feature>
<feature type="helix" evidence="13">
    <location>
        <begin position="1696"/>
        <end position="1699"/>
    </location>
</feature>
<feature type="helix" evidence="13">
    <location>
        <begin position="1702"/>
        <end position="1737"/>
    </location>
</feature>
<reference key="1">
    <citation type="journal article" date="1999" name="Neurosci. Lett.">
        <title>Structure and alternative splicing of the gene encoding alpha1I, a human brain T calcium channel alpha1 subunit.</title>
        <authorList>
            <person name="Mittman S."/>
            <person name="Guo J."/>
            <person name="Emerick M.C."/>
            <person name="Agnew W.S."/>
        </authorList>
    </citation>
    <scope>NUCLEOTIDE SEQUENCE [MRNA] (ISOFORMS 1 AND 2)</scope>
    <source>
        <tissue>Brain</tissue>
    </source>
</reference>
<reference key="2">
    <citation type="journal article" date="2000" name="J. Biol. Chem.">
        <title>Specific properties of T-type calcium channels generated by the human alpha1I subunit.</title>
        <authorList>
            <person name="Monteil A."/>
            <person name="Chemin J."/>
            <person name="Leuranguer V."/>
            <person name="Altier C."/>
            <person name="Mennessier G."/>
            <person name="Bourinet E."/>
            <person name="Lory P."/>
            <person name="Nargeot J."/>
        </authorList>
    </citation>
    <scope>NUCLEOTIDE SEQUENCE [MRNA] (ISOFORM 3)</scope>
    <scope>FUNCTION</scope>
    <scope>TRANSPORTER ACTIVITY</scope>
    <source>
        <tissue>Brain</tissue>
    </source>
</reference>
<reference key="3">
    <citation type="journal article" date="2002" name="Biophys. J.">
        <title>Cloning and expression of the human T-type channel Ca(v)3.3: insights into prepulse facilitation.</title>
        <authorList>
            <person name="Gomora J.C."/>
            <person name="Murbartian J."/>
            <person name="Arias J.M."/>
            <person name="Lee J.-H."/>
            <person name="Perez-Reyes E."/>
        </authorList>
    </citation>
    <scope>NUCLEOTIDE SEQUENCE [MRNA] (ISOFORM 4)</scope>
    <scope>VARIANT VAL-1040</scope>
    <scope>FUNCTION</scope>
    <scope>TRANSPORTER ACTIVITY</scope>
    <source>
        <tissue>Brain</tissue>
    </source>
</reference>
<reference key="4">
    <citation type="journal article" date="1999" name="Nature">
        <title>The DNA sequence of human chromosome 22.</title>
        <authorList>
            <person name="Dunham I."/>
            <person name="Hunt A.R."/>
            <person name="Collins J.E."/>
            <person name="Bruskiewich R."/>
            <person name="Beare D.M."/>
            <person name="Clamp M."/>
            <person name="Smink L.J."/>
            <person name="Ainscough R."/>
            <person name="Almeida J.P."/>
            <person name="Babbage A.K."/>
            <person name="Bagguley C."/>
            <person name="Bailey J."/>
            <person name="Barlow K.F."/>
            <person name="Bates K.N."/>
            <person name="Beasley O.P."/>
            <person name="Bird C.P."/>
            <person name="Blakey S.E."/>
            <person name="Bridgeman A.M."/>
            <person name="Buck D."/>
            <person name="Burgess J."/>
            <person name="Burrill W.D."/>
            <person name="Burton J."/>
            <person name="Carder C."/>
            <person name="Carter N.P."/>
            <person name="Chen Y."/>
            <person name="Clark G."/>
            <person name="Clegg S.M."/>
            <person name="Cobley V.E."/>
            <person name="Cole C.G."/>
            <person name="Collier R.E."/>
            <person name="Connor R."/>
            <person name="Conroy D."/>
            <person name="Corby N.R."/>
            <person name="Coville G.J."/>
            <person name="Cox A.V."/>
            <person name="Davis J."/>
            <person name="Dawson E."/>
            <person name="Dhami P.D."/>
            <person name="Dockree C."/>
            <person name="Dodsworth S.J."/>
            <person name="Durbin R.M."/>
            <person name="Ellington A.G."/>
            <person name="Evans K.L."/>
            <person name="Fey J.M."/>
            <person name="Fleming K."/>
            <person name="French L."/>
            <person name="Garner A.A."/>
            <person name="Gilbert J.G.R."/>
            <person name="Goward M.E."/>
            <person name="Grafham D.V."/>
            <person name="Griffiths M.N.D."/>
            <person name="Hall C."/>
            <person name="Hall R.E."/>
            <person name="Hall-Tamlyn G."/>
            <person name="Heathcott R.W."/>
            <person name="Ho S."/>
            <person name="Holmes S."/>
            <person name="Hunt S.E."/>
            <person name="Jones M.C."/>
            <person name="Kershaw J."/>
            <person name="Kimberley A.M."/>
            <person name="King A."/>
            <person name="Laird G.K."/>
            <person name="Langford C.F."/>
            <person name="Leversha M.A."/>
            <person name="Lloyd C."/>
            <person name="Lloyd D.M."/>
            <person name="Martyn I.D."/>
            <person name="Mashreghi-Mohammadi M."/>
            <person name="Matthews L.H."/>
            <person name="Mccann O.T."/>
            <person name="Mcclay J."/>
            <person name="Mclaren S."/>
            <person name="McMurray A.A."/>
            <person name="Milne S.A."/>
            <person name="Mortimore B.J."/>
            <person name="Odell C.N."/>
            <person name="Pavitt R."/>
            <person name="Pearce A.V."/>
            <person name="Pearson D."/>
            <person name="Phillimore B.J.C.T."/>
            <person name="Phillips S.H."/>
            <person name="Plumb R.W."/>
            <person name="Ramsay H."/>
            <person name="Ramsey Y."/>
            <person name="Rogers L."/>
            <person name="Ross M.T."/>
            <person name="Scott C.E."/>
            <person name="Sehra H.K."/>
            <person name="Skuce C.D."/>
            <person name="Smalley S."/>
            <person name="Smith M.L."/>
            <person name="Soderlund C."/>
            <person name="Spragon L."/>
            <person name="Steward C.A."/>
            <person name="Sulston J.E."/>
            <person name="Swann R.M."/>
            <person name="Vaudin M."/>
            <person name="Wall M."/>
            <person name="Wallis J.M."/>
            <person name="Whiteley M.N."/>
            <person name="Willey D.L."/>
            <person name="Williams L."/>
            <person name="Williams S.A."/>
            <person name="Williamson H."/>
            <person name="Wilmer T.E."/>
            <person name="Wilming L."/>
            <person name="Wright C.L."/>
            <person name="Hubbard T."/>
            <person name="Bentley D.R."/>
            <person name="Beck S."/>
            <person name="Rogers J."/>
            <person name="Shimizu N."/>
            <person name="Minoshima S."/>
            <person name="Kawasaki K."/>
            <person name="Sasaki T."/>
            <person name="Asakawa S."/>
            <person name="Kudoh J."/>
            <person name="Shintani A."/>
            <person name="Shibuya K."/>
            <person name="Yoshizaki Y."/>
            <person name="Aoki N."/>
            <person name="Mitsuyama S."/>
            <person name="Roe B.A."/>
            <person name="Chen F."/>
            <person name="Chu L."/>
            <person name="Crabtree J."/>
            <person name="Deschamps S."/>
            <person name="Do A."/>
            <person name="Do T."/>
            <person name="Dorman A."/>
            <person name="Fang F."/>
            <person name="Fu Y."/>
            <person name="Hu P."/>
            <person name="Hua A."/>
            <person name="Kenton S."/>
            <person name="Lai H."/>
            <person name="Lao H.I."/>
            <person name="Lewis J."/>
            <person name="Lewis S."/>
            <person name="Lin S.-P."/>
            <person name="Loh P."/>
            <person name="Malaj E."/>
            <person name="Nguyen T."/>
            <person name="Pan H."/>
            <person name="Phan S."/>
            <person name="Qi S."/>
            <person name="Qian Y."/>
            <person name="Ray L."/>
            <person name="Ren Q."/>
            <person name="Shaull S."/>
            <person name="Sloan D."/>
            <person name="Song L."/>
            <person name="Wang Q."/>
            <person name="Wang Y."/>
            <person name="Wang Z."/>
            <person name="White J."/>
            <person name="Willingham D."/>
            <person name="Wu H."/>
            <person name="Yao Z."/>
            <person name="Zhan M."/>
            <person name="Zhang G."/>
            <person name="Chissoe S."/>
            <person name="Murray J."/>
            <person name="Miller N."/>
            <person name="Minx P."/>
            <person name="Fulton R."/>
            <person name="Johnson D."/>
            <person name="Bemis G."/>
            <person name="Bentley D."/>
            <person name="Bradshaw H."/>
            <person name="Bourne S."/>
            <person name="Cordes M."/>
            <person name="Du Z."/>
            <person name="Fulton L."/>
            <person name="Goela D."/>
            <person name="Graves T."/>
            <person name="Hawkins J."/>
            <person name="Hinds K."/>
            <person name="Kemp K."/>
            <person name="Latreille P."/>
            <person name="Layman D."/>
            <person name="Ozersky P."/>
            <person name="Rohlfing T."/>
            <person name="Scheet P."/>
            <person name="Walker C."/>
            <person name="Wamsley A."/>
            <person name="Wohldmann P."/>
            <person name="Pepin K."/>
            <person name="Nelson J."/>
            <person name="Korf I."/>
            <person name="Bedell J.A."/>
            <person name="Hillier L.W."/>
            <person name="Mardis E."/>
            <person name="Waterston R."/>
            <person name="Wilson R."/>
            <person name="Emanuel B.S."/>
            <person name="Shaikh T."/>
            <person name="Kurahashi H."/>
            <person name="Saitta S."/>
            <person name="Budarf M.L."/>
            <person name="McDermid H.E."/>
            <person name="Johnson A."/>
            <person name="Wong A.C.C."/>
            <person name="Morrow B.E."/>
            <person name="Edelmann L."/>
            <person name="Kim U.J."/>
            <person name="Shizuya H."/>
            <person name="Simon M.I."/>
            <person name="Dumanski J.P."/>
            <person name="Peyrard M."/>
            <person name="Kedra D."/>
            <person name="Seroussi E."/>
            <person name="Fransson I."/>
            <person name="Tapia I."/>
            <person name="Bruder C.E."/>
            <person name="O'Brien K.P."/>
            <person name="Wilkinson P."/>
            <person name="Bodenteich A."/>
            <person name="Hartman K."/>
            <person name="Hu X."/>
            <person name="Khan A.S."/>
            <person name="Lane L."/>
            <person name="Tilahun Y."/>
            <person name="Wright H."/>
        </authorList>
    </citation>
    <scope>NUCLEOTIDE SEQUENCE [LARGE SCALE GENOMIC DNA]</scope>
</reference>
<reference key="5">
    <citation type="journal article" date="1999" name="DNA Res.">
        <title>Characterization of cDNA clones selected by the GeneMark analysis from size-fractionated cDNA libraries from human brain.</title>
        <authorList>
            <person name="Hirosawa M."/>
            <person name="Nagase T."/>
            <person name="Ishikawa K."/>
            <person name="Kikuno R."/>
            <person name="Nomura N."/>
            <person name="Ohara O."/>
        </authorList>
    </citation>
    <scope>NUCLEOTIDE SEQUENCE [LARGE SCALE MRNA] OF 1200-2223 (ISOFORM 1)</scope>
    <source>
        <tissue>Brain</tissue>
    </source>
</reference>
<reference key="6">
    <citation type="journal article" date="2006" name="J. Biol. Chem.">
        <title>Association of Catsper1 or -2 with Ca(v)3.3 leads to suppression of T-type calcium channel activity.</title>
        <authorList>
            <person name="Zhang D."/>
            <person name="Chen J."/>
            <person name="Saraf A."/>
            <person name="Cassar S."/>
            <person name="Han P."/>
            <person name="Rogers J.C."/>
            <person name="Brioni J.D."/>
            <person name="Sullivan J.P."/>
            <person name="Gopalakrishnan M."/>
        </authorList>
    </citation>
    <scope>INTERACTION WITH CATSPER1 AND CATSPER2</scope>
</reference>
<reference key="7">
    <citation type="journal article" date="2009" name="Sci. Signal.">
        <title>Quantitative phosphoproteomic analysis of T cell receptor signaling reveals system-wide modulation of protein-protein interactions.</title>
        <authorList>
            <person name="Mayya V."/>
            <person name="Lundgren D.H."/>
            <person name="Hwang S.-I."/>
            <person name="Rezaul K."/>
            <person name="Wu L."/>
            <person name="Eng J.K."/>
            <person name="Rodionov V."/>
            <person name="Han D.K."/>
        </authorList>
    </citation>
    <scope>IDENTIFICATION BY MASS SPECTROMETRY [LARGE SCALE ANALYSIS]</scope>
    <source>
        <tissue>Leukemic T-cell</tissue>
    </source>
</reference>
<reference key="8">
    <citation type="journal article" date="2021" name="Brain">
        <title>CACNA1I gain-of-function mutations differentially affect channel gating and cause neurodevelopmental disorders.</title>
        <authorList>
            <person name="El Ghaleb Y."/>
            <person name="Schneeberger P.E."/>
            <person name="Fernandez-Quintero M.L."/>
            <person name="Geisler S.M."/>
            <person name="Pelizzari S."/>
            <person name="Polstra A.M."/>
            <person name="van Hagen J.M."/>
            <person name="Denecke J."/>
            <person name="Campiglio M."/>
            <person name="Liedl K.R."/>
            <person name="Stevens C.A."/>
            <person name="Person R.E."/>
            <person name="Rentas S."/>
            <person name="Marsh E.D."/>
            <person name="Conlin L.K."/>
            <person name="Tuluc P."/>
            <person name="Kutsche K."/>
            <person name="Flucher B.E."/>
        </authorList>
    </citation>
    <scope>VARIANTS NEDSIS ASN-860; MET-860; THR-1306 AND ILE-1425</scope>
    <scope>INVOLVEMENT IN NEDSIS</scope>
    <scope>CHARACTERIZATION OF VARIANTS NEDSIS ASN-860; MET-860; THR-1306 AND ILE-1425</scope>
    <scope>FUNCTION</scope>
    <scope>TRANSPORTER ACTIVITY</scope>
</reference>
<accession>Q9P0X4</accession>
<accession>B0QY12</accession>
<accession>B0QY13</accession>
<accession>B0QY14</accession>
<accession>O95504</accession>
<accession>Q5JZ88</accession>
<accession>Q7Z6S9</accession>
<accession>Q8NFX6</accession>
<accession>Q9NZC8</accession>
<accession>Q9UH15</accession>
<accession>Q9UH30</accession>
<accession>Q9ULU9</accession>
<accession>Q9UNE6</accession>
<sequence length="2223" mass="245103">MAESASPPSSSAAAPAAEPGVTTEQPGPRSPPSSPPGLEEPLDGADPHVPHPDLAPIAFFCLRQTTSPRNWCIKMVCNPWFECVSMLVILLNCVTLGMYQPCDDMDCLSDRCKILQVFDDFIFIFFAMEMVLKMVALGIFGKKCYLGDTWNRLDFFIVMAGMVEYSLDLQNINLSAIRTVRVLRPLKAINRVPSMRILVNLLLDTLPMLGNVLLLCFFVFFIFGIIGVQLWAGLLRNRCFLEENFTIQGDVALPPYYQPEEDDEMPFICSLSGDNGIMGCHEIPPLKEQGRECCLSKDDVYDFGAGRQDLNASGLCVNWNRYYNVCRTGSANPHKGAINFDNIGYAWIVIFQVITLEGWVEIMYYVMDAHSFYNFIYFILLIIVGSFFMINLCLVVIATQFSETKQREHRLMLEQRQRYLSSSTVASYAEPGDCYEEIFQYVCHILRKAKRRALGLYQALQSRRQALGPEAPAPAKPGPHAKEPRHYHGKTKGQGDEGRHLGSRHCQTLHGPASPGNDHSGRELCPQHSPLDATPHTLVQPIPATLASDPASCPCCQHEDGRRPSGLGSTDSGQEGSGSGSSAGGEDEADGDGARSSEDGASSELGKEEEEEEQADGAVWLCGDVWRETRAKLRGIVDSKYFNRGIMMAILVNTVSMGIEHHEQPEELTNILEICNVVFTSMFALEMILKLAAFGLFDYLRNPYNIFDSIIVIISIWEIVGQADGGLSVLRTFRLLRVLKLVRFMPALRRQLVVLMKTMDNVATFCMLLMLFIFIFSILGMHIFGCKFSLRTDTGDTVPDRKNFDSLLWAIVTVFQILTQEDWNVVLYNGMASTSPWASLYFVALMTFGNYVLFNLLVAILVEGFQAEGDANRSYSDEDQSSSNIEEFDKLQEGLDSSGDPKLCPIPMTPNGHLDPSLPLGGHLGPAGAAGPAPRLSLQPDPMLVALGSRKSSVMSLGRMSYDQRSLSSSRSSYYGPWGRSAAWASRRSSWNSLKHKPPSAEHESLLSAERGGGARVCEVAADEGPPRAAPLHTPHAHHIHHGPHLAHRHRHHRRTLSLDNRDSVDLAELVPAVGAHPRAAWRAAGPAPGHEDCNGRMPSIAKDVFTKMGDRGDRGEDEEEIDYTLCFRVRKMIDVYKPDWCEVREDWSVYLFSPENRFRVLCQTIIAHKLFDYVVLAFIFLNCITIALERPQIEAGSTERIFLTVSNYIFTAIFVGEMTLKVVSLGLYFGEQAYLRSSWNVLDGFLVFVSIIDIVVSLASAGGAKILGVLRVLRLLRTLRPLRVISRAPGLKLVVETLISSLKPIGNIVLICCAFFIIFGILGVQLFKGKFYHCLGVDTRNITNRSDCMAANYRWVHHKYNFDNLGQALMSLFVLASKDGWVNIMYNGLDAVAVDQQPVTNHNPWMLLYFISFLLIVSFFVLNMFVGVVVENFHKCRQHQEAEEARRREEKRLRRLEKKRRKAQRLPYYATYCHTRLLIHSMCTSHYLDIFITFIICLNVVTMSLEHYNQPTSLETALKYCNYMFTTVFVLEAVLKLVAFGLRRFFKDRWNQLDLAIVLLSVMGITLEEIEINAALPINPTIIRIMRVLRIARVLKLLKMATGMRALLDTVVQALPQVGNLGLLFMLLFFIYAALGVELFGKLVCNDENPCEGMSRHATFENFGMAFLTLFQVSTGDNWNGIMKDTLRDCTHDERSCLSSLQFVSPLYFVSFVLTAQFVLINVVVAVLMKHLDDSNKEAQEDAEMDAELELEMAHGLGPGPRLPTGSPGAPGRGPGGAGGGGDTEGGLCRRCYSPAQENLWLDSVSLIIKDSLEGELTIIDNLSGSIFHHYSSPAGCKKCHHDKQEVQLAETEAFSLNSDRSSSILLGDDLSLEDPTACPPGRKDSKGELDPPEPMRVGDLGECFFPLSSTAVSPDPENFLCEMEEIPFNPVRSWLKHDSSQAPPSPFSPDASSPLLPMPAEFFHPAVSASQKGPEKGTGTGTLPKIALQGSWASLRSPRVNCTLLRQATGSDTSLDASPSSSAGSLQTTLEDSLTLSDSPRRALGPPAPAPGPRAGLSPAARRRLSLRGRGLFSLRGLRAHQRSHSSGGSTSPGCTHHDSMDPSDEEGRGGAGGGGAGSEHSETLSSLSLTSLFCPPPPPPAPGLTPARKFSSTSSLAAPGRPHAAALAHGLARSPSWAADRSKDPPGRAPLPMGLGPLAPPPQPLPGELEPGDAASKRKR</sequence>
<protein>
    <recommendedName>
        <fullName>Voltage-dependent T-type calcium channel subunit alpha-1I</fullName>
    </recommendedName>
    <alternativeName>
        <fullName>Voltage-gated calcium channel subunit alpha Cav3.3</fullName>
        <shortName>Ca(v)3.3</shortName>
    </alternativeName>
</protein>